<protein>
    <recommendedName>
        <fullName>Dimethyladenosine transferase 2, mitochondrial</fullName>
        <ecNumber>2.1.1.-</ecNumber>
    </recommendedName>
    <alternativeName>
        <fullName>Mitochondrial 12S rRNA dimethylase 2</fullName>
    </alternativeName>
    <alternativeName>
        <fullName>Mitochondrial transcription factor B2</fullName>
    </alternativeName>
    <alternativeName>
        <fullName>S-adenosylmethionine-6-N', N'-adenosyl(rRNA) dimethyltransferase 2</fullName>
    </alternativeName>
    <alternativeName>
        <fullName>d-mtTFB2</fullName>
    </alternativeName>
</protein>
<name>TFB2M_DROME</name>
<sequence>MLPLRCSWSFARANYSTKKELVTRYSGDFPEKLLNRKQKVPTHMYIANSEAAARINQYLEPHFQSSGCDTVMELNSGAGYFTRHLLDRESQFRRIILLESMDHFMPKIQELHTLYPERVKVRQGDFVNLWKLVYMDKMDGGSRVADLLSDVPQKAFTDDINMLVFGAVGSYPFFKHLINSLIFQTSLFNLGRCEMILAMPPPIYIHLTCNNEIGYLIYRSTSVLFQILFEHKFIAKVPREDFLPQQMAYSPTKSSKLGKVQSINPEYLYLVKFTPRRNLHELCQSQDLPALWFFIKQNYVSRRNRIIPNLEKWVPGCGPRLIINPKSSESVTPIYPDELPKKLPQYSCQSTTMSTRNYYPGINIYTQFGDLLPSQILTLFSQFRQWPEYGESSFLASLENALLKLETANDEPNLEDGVTLPEEDDAEADEIIEEESPVPATTPVKRRRKASS</sequence>
<accession>Q9VH38</accession>
<accession>Q95SS3</accession>
<comment type="function">
    <text evidence="4">Probable S-adenosyl-L-methionine-dependent methyltransferase which specifically dimethylates mitochondrial 12S rRNA at the conserved stem loop. Also required for basal transcription of mitochondrial DNA. Also regulates mitochondrial DNA copy number. Stimulates transcription independently of the methyltransferase activity.</text>
</comment>
<comment type="subcellular location">
    <subcellularLocation>
        <location evidence="4">Mitochondrion</location>
    </subcellularLocation>
</comment>
<comment type="similarity">
    <text evidence="2">Belongs to the class I-like SAM-binding methyltransferase superfamily. rRNA adenine N(6)-methyltransferase family. KsgA subfamily.</text>
</comment>
<organism>
    <name type="scientific">Drosophila melanogaster</name>
    <name type="common">Fruit fly</name>
    <dbReference type="NCBI Taxonomy" id="7227"/>
    <lineage>
        <taxon>Eukaryota</taxon>
        <taxon>Metazoa</taxon>
        <taxon>Ecdysozoa</taxon>
        <taxon>Arthropoda</taxon>
        <taxon>Hexapoda</taxon>
        <taxon>Insecta</taxon>
        <taxon>Pterygota</taxon>
        <taxon>Neoptera</taxon>
        <taxon>Endopterygota</taxon>
        <taxon>Diptera</taxon>
        <taxon>Brachycera</taxon>
        <taxon>Muscomorpha</taxon>
        <taxon>Ephydroidea</taxon>
        <taxon>Drosophilidae</taxon>
        <taxon>Drosophila</taxon>
        <taxon>Sophophora</taxon>
    </lineage>
</organism>
<gene>
    <name type="primary">mtTFB2</name>
    <name type="ORF">CG3910</name>
</gene>
<keyword id="KW-0489">Methyltransferase</keyword>
<keyword id="KW-0496">Mitochondrion</keyword>
<keyword id="KW-1185">Reference proteome</keyword>
<keyword id="KW-0694">RNA-binding</keyword>
<keyword id="KW-0698">rRNA processing</keyword>
<keyword id="KW-0949">S-adenosyl-L-methionine</keyword>
<keyword id="KW-0804">Transcription</keyword>
<keyword id="KW-0805">Transcription regulation</keyword>
<keyword id="KW-0808">Transferase</keyword>
<keyword id="KW-0809">Transit peptide</keyword>
<evidence type="ECO:0000255" key="1"/>
<evidence type="ECO:0000255" key="2">
    <source>
        <dbReference type="PROSITE-ProRule" id="PRU01026"/>
    </source>
</evidence>
<evidence type="ECO:0000256" key="3">
    <source>
        <dbReference type="SAM" id="MobiDB-lite"/>
    </source>
</evidence>
<evidence type="ECO:0000269" key="4">
    <source>
    </source>
</evidence>
<feature type="transit peptide" description="Mitochondrion" evidence="1">
    <location>
        <begin position="1"/>
        <end status="unknown"/>
    </location>
</feature>
<feature type="chain" id="PRO_0000273185" description="Dimethyladenosine transferase 2, mitochondrial">
    <location>
        <begin status="unknown"/>
        <end position="452"/>
    </location>
</feature>
<feature type="region of interest" description="Disordered" evidence="3">
    <location>
        <begin position="408"/>
        <end position="452"/>
    </location>
</feature>
<feature type="compositionally biased region" description="Acidic residues" evidence="3">
    <location>
        <begin position="421"/>
        <end position="436"/>
    </location>
</feature>
<feature type="binding site" evidence="2">
    <location>
        <position position="46"/>
    </location>
    <ligand>
        <name>S-adenosyl-L-methionine</name>
        <dbReference type="ChEBI" id="CHEBI:59789"/>
    </ligand>
</feature>
<feature type="binding site" evidence="2">
    <location>
        <position position="99"/>
    </location>
    <ligand>
        <name>S-adenosyl-L-methionine</name>
        <dbReference type="ChEBI" id="CHEBI:59789"/>
    </ligand>
</feature>
<feature type="binding site" evidence="2">
    <location>
        <position position="125"/>
    </location>
    <ligand>
        <name>S-adenosyl-L-methionine</name>
        <dbReference type="ChEBI" id="CHEBI:59789"/>
    </ligand>
</feature>
<dbReference type="EC" id="2.1.1.-"/>
<dbReference type="EMBL" id="AY508412">
    <property type="protein sequence ID" value="AAS91579.1"/>
    <property type="molecule type" value="mRNA"/>
</dbReference>
<dbReference type="EMBL" id="AE014297">
    <property type="protein sequence ID" value="AAF54482.2"/>
    <property type="molecule type" value="Genomic_DNA"/>
</dbReference>
<dbReference type="EMBL" id="AY060616">
    <property type="protein sequence ID" value="AAL28164.1"/>
    <property type="molecule type" value="mRNA"/>
</dbReference>
<dbReference type="RefSeq" id="NP_649971.1">
    <property type="nucleotide sequence ID" value="NM_141714.4"/>
</dbReference>
<dbReference type="SMR" id="Q9VH38"/>
<dbReference type="FunCoup" id="Q9VH38">
    <property type="interactions" value="375"/>
</dbReference>
<dbReference type="STRING" id="7227.FBpp0081651"/>
<dbReference type="PaxDb" id="7227-FBpp0081651"/>
<dbReference type="DNASU" id="41228"/>
<dbReference type="EnsemblMetazoa" id="FBtr0082173">
    <property type="protein sequence ID" value="FBpp0081651"/>
    <property type="gene ID" value="FBgn0037778"/>
</dbReference>
<dbReference type="GeneID" id="41228"/>
<dbReference type="KEGG" id="dme:Dmel_CG3910"/>
<dbReference type="AGR" id="FB:FBgn0037778"/>
<dbReference type="CTD" id="41228"/>
<dbReference type="FlyBase" id="FBgn0037778">
    <property type="gene designation" value="mtTFB2"/>
</dbReference>
<dbReference type="VEuPathDB" id="VectorBase:FBgn0037778"/>
<dbReference type="eggNOG" id="ENOG502S0IT">
    <property type="taxonomic scope" value="Eukaryota"/>
</dbReference>
<dbReference type="HOGENOM" id="CLU_043862_0_0_1"/>
<dbReference type="InParanoid" id="Q9VH38"/>
<dbReference type="OMA" id="QFRQWPE"/>
<dbReference type="OrthoDB" id="9895503at2759"/>
<dbReference type="PhylomeDB" id="Q9VH38"/>
<dbReference type="Reactome" id="R-DME-163282">
    <property type="pathway name" value="Mitochondrial transcription initiation"/>
</dbReference>
<dbReference type="BioGRID-ORCS" id="41228">
    <property type="hits" value="0 hits in 1 CRISPR screen"/>
</dbReference>
<dbReference type="GenomeRNAi" id="41228"/>
<dbReference type="PRO" id="PR:Q9VH38"/>
<dbReference type="Proteomes" id="UP000000803">
    <property type="component" value="Chromosome 3R"/>
</dbReference>
<dbReference type="Bgee" id="FBgn0037778">
    <property type="expression patterns" value="Expressed in eye disc (Drosophila) and 25 other cell types or tissues"/>
</dbReference>
<dbReference type="GO" id="GO:0005759">
    <property type="term" value="C:mitochondrial matrix"/>
    <property type="evidence" value="ECO:0000250"/>
    <property type="project" value="UniProtKB"/>
</dbReference>
<dbReference type="GO" id="GO:0005739">
    <property type="term" value="C:mitochondrion"/>
    <property type="evidence" value="ECO:0000314"/>
    <property type="project" value="FlyBase"/>
</dbReference>
<dbReference type="GO" id="GO:0034246">
    <property type="term" value="F:mitochondrial transcription factor activity"/>
    <property type="evidence" value="ECO:0000250"/>
    <property type="project" value="UniProtKB"/>
</dbReference>
<dbReference type="GO" id="GO:0003723">
    <property type="term" value="F:RNA binding"/>
    <property type="evidence" value="ECO:0007669"/>
    <property type="project" value="UniProtKB-KW"/>
</dbReference>
<dbReference type="GO" id="GO:0000179">
    <property type="term" value="F:rRNA (adenine-N6,N6-)-dimethyltransferase activity"/>
    <property type="evidence" value="ECO:0000318"/>
    <property type="project" value="GO_Central"/>
</dbReference>
<dbReference type="GO" id="GO:0006390">
    <property type="term" value="P:mitochondrial transcription"/>
    <property type="evidence" value="ECO:0000315"/>
    <property type="project" value="FlyBase"/>
</dbReference>
<dbReference type="GO" id="GO:0031167">
    <property type="term" value="P:rRNA methylation"/>
    <property type="evidence" value="ECO:0000318"/>
    <property type="project" value="GO_Central"/>
</dbReference>
<dbReference type="GO" id="GO:0006391">
    <property type="term" value="P:transcription initiation at mitochondrial promoter"/>
    <property type="evidence" value="ECO:0000318"/>
    <property type="project" value="GO_Central"/>
</dbReference>
<dbReference type="FunFam" id="3.40.50.150:FF:000637">
    <property type="entry name" value="rRNA adenine N(6)-methyltransferase"/>
    <property type="match status" value="1"/>
</dbReference>
<dbReference type="Gene3D" id="3.40.50.150">
    <property type="entry name" value="Vaccinia Virus protein VP39"/>
    <property type="match status" value="1"/>
</dbReference>
<dbReference type="InterPro" id="IPR001737">
    <property type="entry name" value="KsgA/Erm"/>
</dbReference>
<dbReference type="InterPro" id="IPR029063">
    <property type="entry name" value="SAM-dependent_MTases_sf"/>
</dbReference>
<dbReference type="PANTHER" id="PTHR11727">
    <property type="entry name" value="DIMETHYLADENOSINE TRANSFERASE"/>
    <property type="match status" value="1"/>
</dbReference>
<dbReference type="PANTHER" id="PTHR11727:SF13">
    <property type="entry name" value="DIMETHYLADENOSINE TRANSFERASE 2, MITOCHONDRIAL"/>
    <property type="match status" value="1"/>
</dbReference>
<dbReference type="Pfam" id="PF00398">
    <property type="entry name" value="RrnaAD"/>
    <property type="match status" value="1"/>
</dbReference>
<dbReference type="PIRSF" id="PIRSF027833">
    <property type="entry name" value="MtTFB2"/>
    <property type="match status" value="1"/>
</dbReference>
<dbReference type="SUPFAM" id="SSF53335">
    <property type="entry name" value="S-adenosyl-L-methionine-dependent methyltransferases"/>
    <property type="match status" value="1"/>
</dbReference>
<dbReference type="PROSITE" id="PS51689">
    <property type="entry name" value="SAM_RNA_A_N6_MT"/>
    <property type="match status" value="1"/>
</dbReference>
<reference key="1">
    <citation type="journal article" date="2004" name="J. Biol. Chem.">
        <title>Drosophila mitochondrial transcription factor B2 regulates mitochondrial DNA copy number and transcription in schneider cells.</title>
        <authorList>
            <person name="Matsushima Y."/>
            <person name="Garesse R."/>
            <person name="Kaguni L.S."/>
        </authorList>
    </citation>
    <scope>NUCLEOTIDE SEQUENCE [MRNA]</scope>
    <scope>FUNCTION</scope>
    <scope>SUBCELLULAR LOCATION</scope>
</reference>
<reference key="2">
    <citation type="journal article" date="2000" name="Science">
        <title>The genome sequence of Drosophila melanogaster.</title>
        <authorList>
            <person name="Adams M.D."/>
            <person name="Celniker S.E."/>
            <person name="Holt R.A."/>
            <person name="Evans C.A."/>
            <person name="Gocayne J.D."/>
            <person name="Amanatides P.G."/>
            <person name="Scherer S.E."/>
            <person name="Li P.W."/>
            <person name="Hoskins R.A."/>
            <person name="Galle R.F."/>
            <person name="George R.A."/>
            <person name="Lewis S.E."/>
            <person name="Richards S."/>
            <person name="Ashburner M."/>
            <person name="Henderson S.N."/>
            <person name="Sutton G.G."/>
            <person name="Wortman J.R."/>
            <person name="Yandell M.D."/>
            <person name="Zhang Q."/>
            <person name="Chen L.X."/>
            <person name="Brandon R.C."/>
            <person name="Rogers Y.-H.C."/>
            <person name="Blazej R.G."/>
            <person name="Champe M."/>
            <person name="Pfeiffer B.D."/>
            <person name="Wan K.H."/>
            <person name="Doyle C."/>
            <person name="Baxter E.G."/>
            <person name="Helt G."/>
            <person name="Nelson C.R."/>
            <person name="Miklos G.L.G."/>
            <person name="Abril J.F."/>
            <person name="Agbayani A."/>
            <person name="An H.-J."/>
            <person name="Andrews-Pfannkoch C."/>
            <person name="Baldwin D."/>
            <person name="Ballew R.M."/>
            <person name="Basu A."/>
            <person name="Baxendale J."/>
            <person name="Bayraktaroglu L."/>
            <person name="Beasley E.M."/>
            <person name="Beeson K.Y."/>
            <person name="Benos P.V."/>
            <person name="Berman B.P."/>
            <person name="Bhandari D."/>
            <person name="Bolshakov S."/>
            <person name="Borkova D."/>
            <person name="Botchan M.R."/>
            <person name="Bouck J."/>
            <person name="Brokstein P."/>
            <person name="Brottier P."/>
            <person name="Burtis K.C."/>
            <person name="Busam D.A."/>
            <person name="Butler H."/>
            <person name="Cadieu E."/>
            <person name="Center A."/>
            <person name="Chandra I."/>
            <person name="Cherry J.M."/>
            <person name="Cawley S."/>
            <person name="Dahlke C."/>
            <person name="Davenport L.B."/>
            <person name="Davies P."/>
            <person name="de Pablos B."/>
            <person name="Delcher A."/>
            <person name="Deng Z."/>
            <person name="Mays A.D."/>
            <person name="Dew I."/>
            <person name="Dietz S.M."/>
            <person name="Dodson K."/>
            <person name="Doup L.E."/>
            <person name="Downes M."/>
            <person name="Dugan-Rocha S."/>
            <person name="Dunkov B.C."/>
            <person name="Dunn P."/>
            <person name="Durbin K.J."/>
            <person name="Evangelista C.C."/>
            <person name="Ferraz C."/>
            <person name="Ferriera S."/>
            <person name="Fleischmann W."/>
            <person name="Fosler C."/>
            <person name="Gabrielian A.E."/>
            <person name="Garg N.S."/>
            <person name="Gelbart W.M."/>
            <person name="Glasser K."/>
            <person name="Glodek A."/>
            <person name="Gong F."/>
            <person name="Gorrell J.H."/>
            <person name="Gu Z."/>
            <person name="Guan P."/>
            <person name="Harris M."/>
            <person name="Harris N.L."/>
            <person name="Harvey D.A."/>
            <person name="Heiman T.J."/>
            <person name="Hernandez J.R."/>
            <person name="Houck J."/>
            <person name="Hostin D."/>
            <person name="Houston K.A."/>
            <person name="Howland T.J."/>
            <person name="Wei M.-H."/>
            <person name="Ibegwam C."/>
            <person name="Jalali M."/>
            <person name="Kalush F."/>
            <person name="Karpen G.H."/>
            <person name="Ke Z."/>
            <person name="Kennison J.A."/>
            <person name="Ketchum K.A."/>
            <person name="Kimmel B.E."/>
            <person name="Kodira C.D."/>
            <person name="Kraft C.L."/>
            <person name="Kravitz S."/>
            <person name="Kulp D."/>
            <person name="Lai Z."/>
            <person name="Lasko P."/>
            <person name="Lei Y."/>
            <person name="Levitsky A.A."/>
            <person name="Li J.H."/>
            <person name="Li Z."/>
            <person name="Liang Y."/>
            <person name="Lin X."/>
            <person name="Liu X."/>
            <person name="Mattei B."/>
            <person name="McIntosh T.C."/>
            <person name="McLeod M.P."/>
            <person name="McPherson D."/>
            <person name="Merkulov G."/>
            <person name="Milshina N.V."/>
            <person name="Mobarry C."/>
            <person name="Morris J."/>
            <person name="Moshrefi A."/>
            <person name="Mount S.M."/>
            <person name="Moy M."/>
            <person name="Murphy B."/>
            <person name="Murphy L."/>
            <person name="Muzny D.M."/>
            <person name="Nelson D.L."/>
            <person name="Nelson D.R."/>
            <person name="Nelson K.A."/>
            <person name="Nixon K."/>
            <person name="Nusskern D.R."/>
            <person name="Pacleb J.M."/>
            <person name="Palazzolo M."/>
            <person name="Pittman G.S."/>
            <person name="Pan S."/>
            <person name="Pollard J."/>
            <person name="Puri V."/>
            <person name="Reese M.G."/>
            <person name="Reinert K."/>
            <person name="Remington K."/>
            <person name="Saunders R.D.C."/>
            <person name="Scheeler F."/>
            <person name="Shen H."/>
            <person name="Shue B.C."/>
            <person name="Siden-Kiamos I."/>
            <person name="Simpson M."/>
            <person name="Skupski M.P."/>
            <person name="Smith T.J."/>
            <person name="Spier E."/>
            <person name="Spradling A.C."/>
            <person name="Stapleton M."/>
            <person name="Strong R."/>
            <person name="Sun E."/>
            <person name="Svirskas R."/>
            <person name="Tector C."/>
            <person name="Turner R."/>
            <person name="Venter E."/>
            <person name="Wang A.H."/>
            <person name="Wang X."/>
            <person name="Wang Z.-Y."/>
            <person name="Wassarman D.A."/>
            <person name="Weinstock G.M."/>
            <person name="Weissenbach J."/>
            <person name="Williams S.M."/>
            <person name="Woodage T."/>
            <person name="Worley K.C."/>
            <person name="Wu D."/>
            <person name="Yang S."/>
            <person name="Yao Q.A."/>
            <person name="Ye J."/>
            <person name="Yeh R.-F."/>
            <person name="Zaveri J.S."/>
            <person name="Zhan M."/>
            <person name="Zhang G."/>
            <person name="Zhao Q."/>
            <person name="Zheng L."/>
            <person name="Zheng X.H."/>
            <person name="Zhong F.N."/>
            <person name="Zhong W."/>
            <person name="Zhou X."/>
            <person name="Zhu S.C."/>
            <person name="Zhu X."/>
            <person name="Smith H.O."/>
            <person name="Gibbs R.A."/>
            <person name="Myers E.W."/>
            <person name="Rubin G.M."/>
            <person name="Venter J.C."/>
        </authorList>
    </citation>
    <scope>NUCLEOTIDE SEQUENCE [LARGE SCALE GENOMIC DNA]</scope>
    <source>
        <strain>Berkeley</strain>
    </source>
</reference>
<reference key="3">
    <citation type="journal article" date="2002" name="Genome Biol.">
        <title>Annotation of the Drosophila melanogaster euchromatic genome: a systematic review.</title>
        <authorList>
            <person name="Misra S."/>
            <person name="Crosby M.A."/>
            <person name="Mungall C.J."/>
            <person name="Matthews B.B."/>
            <person name="Campbell K.S."/>
            <person name="Hradecky P."/>
            <person name="Huang Y."/>
            <person name="Kaminker J.S."/>
            <person name="Millburn G.H."/>
            <person name="Prochnik S.E."/>
            <person name="Smith C.D."/>
            <person name="Tupy J.L."/>
            <person name="Whitfield E.J."/>
            <person name="Bayraktaroglu L."/>
            <person name="Berman B.P."/>
            <person name="Bettencourt B.R."/>
            <person name="Celniker S.E."/>
            <person name="de Grey A.D.N.J."/>
            <person name="Drysdale R.A."/>
            <person name="Harris N.L."/>
            <person name="Richter J."/>
            <person name="Russo S."/>
            <person name="Schroeder A.J."/>
            <person name="Shu S.Q."/>
            <person name="Stapleton M."/>
            <person name="Yamada C."/>
            <person name="Ashburner M."/>
            <person name="Gelbart W.M."/>
            <person name="Rubin G.M."/>
            <person name="Lewis S.E."/>
        </authorList>
    </citation>
    <scope>GENOME REANNOTATION</scope>
    <source>
        <strain>Berkeley</strain>
    </source>
</reference>
<reference key="4">
    <citation type="journal article" date="2002" name="Genome Biol.">
        <title>A Drosophila full-length cDNA resource.</title>
        <authorList>
            <person name="Stapleton M."/>
            <person name="Carlson J.W."/>
            <person name="Brokstein P."/>
            <person name="Yu C."/>
            <person name="Champe M."/>
            <person name="George R.A."/>
            <person name="Guarin H."/>
            <person name="Kronmiller B."/>
            <person name="Pacleb J.M."/>
            <person name="Park S."/>
            <person name="Wan K.H."/>
            <person name="Rubin G.M."/>
            <person name="Celniker S.E."/>
        </authorList>
    </citation>
    <scope>NUCLEOTIDE SEQUENCE [LARGE SCALE MRNA]</scope>
    <source>
        <strain>Berkeley</strain>
        <tissue>Head</tissue>
    </source>
</reference>
<proteinExistence type="evidence at transcript level"/>